<protein>
    <recommendedName>
        <fullName>tRNA:m(4)X modification enzyme TRM13</fullName>
        <ecNumber>2.1.1.225</ecNumber>
    </recommendedName>
    <alternativeName>
        <fullName>tRNA methylase 13</fullName>
    </alternativeName>
</protein>
<keyword id="KW-0963">Cytoplasm</keyword>
<keyword id="KW-0479">Metal-binding</keyword>
<keyword id="KW-0489">Methyltransferase</keyword>
<keyword id="KW-0539">Nucleus</keyword>
<keyword id="KW-1185">Reference proteome</keyword>
<keyword id="KW-0949">S-adenosyl-L-methionine</keyword>
<keyword id="KW-0808">Transferase</keyword>
<keyword id="KW-0819">tRNA processing</keyword>
<keyword id="KW-0862">Zinc</keyword>
<keyword id="KW-0863">Zinc-finger</keyword>
<proteinExistence type="inferred from homology"/>
<accession>A3LXS6</accession>
<organism>
    <name type="scientific">Scheffersomyces stipitis (strain ATCC 58785 / CBS 6054 / NBRC 10063 / NRRL Y-11545)</name>
    <name type="common">Yeast</name>
    <name type="synonym">Pichia stipitis</name>
    <dbReference type="NCBI Taxonomy" id="322104"/>
    <lineage>
        <taxon>Eukaryota</taxon>
        <taxon>Fungi</taxon>
        <taxon>Dikarya</taxon>
        <taxon>Ascomycota</taxon>
        <taxon>Saccharomycotina</taxon>
        <taxon>Pichiomycetes</taxon>
        <taxon>Debaryomycetaceae</taxon>
        <taxon>Scheffersomyces</taxon>
    </lineage>
</organism>
<gene>
    <name type="primary">TRM13</name>
    <name type="ORF">PICST_32922</name>
</gene>
<feature type="chain" id="PRO_0000339426" description="tRNA:m(4)X modification enzyme TRM13">
    <location>
        <begin position="1"/>
        <end position="420"/>
    </location>
</feature>
<feature type="zinc finger region" description="CHHC U11-48K-type" evidence="3">
    <location>
        <begin position="43"/>
        <end position="70"/>
    </location>
</feature>
<feature type="binding site" evidence="3">
    <location>
        <position position="46"/>
    </location>
    <ligand>
        <name>Zn(2+)</name>
        <dbReference type="ChEBI" id="CHEBI:29105"/>
    </ligand>
</feature>
<feature type="binding site" evidence="3">
    <location>
        <position position="52"/>
    </location>
    <ligand>
        <name>Zn(2+)</name>
        <dbReference type="ChEBI" id="CHEBI:29105"/>
    </ligand>
</feature>
<feature type="binding site" evidence="3">
    <location>
        <position position="62"/>
    </location>
    <ligand>
        <name>Zn(2+)</name>
        <dbReference type="ChEBI" id="CHEBI:29105"/>
    </ligand>
</feature>
<feature type="binding site" evidence="3">
    <location>
        <position position="66"/>
    </location>
    <ligand>
        <name>Zn(2+)</name>
        <dbReference type="ChEBI" id="CHEBI:29105"/>
    </ligand>
</feature>
<sequence>MIKKNRRCAMRRKGSQKYCSEHIIYNESSSIVNTDTKLSEDERVPCPLDGKHTVWKKNLAVHLKKCNAKPVERTEEWFSKDINVKLKNSLGETEDITRSEDKTLDEKDLYSKYIPIIEGINFEPLQYRISEHSGLQQRLNEVLIQKHALQQSSLIGNIKDAKLLSPNNTFVEFGCGKAELSRFVNLCLLDDLKQKVNNEVTLENYGYGFIDRGVNRMKMDKKILKDCLDSPIEITPRIQRTRIDIKDLDLDKFINKLQPSKIVAISKHLCGAATDLTLKSLLNSSLLSDNRDKFGGLLIAMCCRHVCSYDQLLPKSREYLAEKGFKTPDSFRILKKMVSWAVCSKKEHAKNVERLEAEHISQLDYSSRERLGFVARRLIDESRVYALKSMLSGFEVKMFWYVEKDVTLENVCLYVGQEPM</sequence>
<name>TRM13_PICST</name>
<reference key="1">
    <citation type="journal article" date="2007" name="Nat. Biotechnol.">
        <title>Genome sequence of the lignocellulose-bioconverting and xylose-fermenting yeast Pichia stipitis.</title>
        <authorList>
            <person name="Jeffries T.W."/>
            <person name="Grigoriev I.V."/>
            <person name="Grimwood J."/>
            <person name="Laplaza J.M."/>
            <person name="Aerts A."/>
            <person name="Salamov A."/>
            <person name="Schmutz J."/>
            <person name="Lindquist E."/>
            <person name="Dehal P."/>
            <person name="Shapiro H."/>
            <person name="Jin Y.-S."/>
            <person name="Passoth V."/>
            <person name="Richardson P.M."/>
        </authorList>
    </citation>
    <scope>NUCLEOTIDE SEQUENCE [LARGE SCALE GENOMIC DNA]</scope>
    <source>
        <strain>ATCC 58785 / CBS 6054 / NBRC 10063 / NRRL Y-11545</strain>
    </source>
</reference>
<dbReference type="EC" id="2.1.1.225"/>
<dbReference type="EMBL" id="CP000500">
    <property type="protein sequence ID" value="ABN67518.2"/>
    <property type="molecule type" value="Genomic_DNA"/>
</dbReference>
<dbReference type="RefSeq" id="XP_001385547.2">
    <property type="nucleotide sequence ID" value="XM_001385510.1"/>
</dbReference>
<dbReference type="FunCoup" id="A3LXS6">
    <property type="interactions" value="473"/>
</dbReference>
<dbReference type="STRING" id="322104.A3LXS6"/>
<dbReference type="GeneID" id="4840039"/>
<dbReference type="KEGG" id="pic:PICST_32922"/>
<dbReference type="eggNOG" id="KOG2811">
    <property type="taxonomic scope" value="Eukaryota"/>
</dbReference>
<dbReference type="HOGENOM" id="CLU_027610_0_0_1"/>
<dbReference type="InParanoid" id="A3LXS6"/>
<dbReference type="OMA" id="HRCSWRS"/>
<dbReference type="OrthoDB" id="258806at2759"/>
<dbReference type="Proteomes" id="UP000002258">
    <property type="component" value="Chromosome 6"/>
</dbReference>
<dbReference type="GO" id="GO:0005737">
    <property type="term" value="C:cytoplasm"/>
    <property type="evidence" value="ECO:0007669"/>
    <property type="project" value="UniProtKB-SubCell"/>
</dbReference>
<dbReference type="GO" id="GO:0005730">
    <property type="term" value="C:nucleolus"/>
    <property type="evidence" value="ECO:0007669"/>
    <property type="project" value="UniProtKB-SubCell"/>
</dbReference>
<dbReference type="GO" id="GO:0106050">
    <property type="term" value="F:tRNA 2'-O-methyltransferase activity"/>
    <property type="evidence" value="ECO:0007669"/>
    <property type="project" value="EnsemblFungi"/>
</dbReference>
<dbReference type="GO" id="GO:0008270">
    <property type="term" value="F:zinc ion binding"/>
    <property type="evidence" value="ECO:0007669"/>
    <property type="project" value="UniProtKB-KW"/>
</dbReference>
<dbReference type="GO" id="GO:0002128">
    <property type="term" value="P:tRNA nucleoside ribose methylation"/>
    <property type="evidence" value="ECO:0007669"/>
    <property type="project" value="EnsemblFungi"/>
</dbReference>
<dbReference type="InterPro" id="IPR007871">
    <property type="entry name" value="Methyltransferase_TRM13"/>
</dbReference>
<dbReference type="InterPro" id="IPR039044">
    <property type="entry name" value="Trm13"/>
</dbReference>
<dbReference type="InterPro" id="IPR022776">
    <property type="entry name" value="TRM13/UPF0224_CHHC_Znf_dom"/>
</dbReference>
<dbReference type="InterPro" id="IPR021721">
    <property type="entry name" value="Znf_CCCH-type_TRM13"/>
</dbReference>
<dbReference type="PANTHER" id="PTHR12998">
    <property type="entry name" value="TRNA:M(4)X MODIFICATION ENZYME TRM13 HOMOLOG"/>
    <property type="match status" value="1"/>
</dbReference>
<dbReference type="PANTHER" id="PTHR12998:SF0">
    <property type="entry name" value="TRNA:M(4)X MODIFICATION ENZYME TRM13 HOMOLOG"/>
    <property type="match status" value="1"/>
</dbReference>
<dbReference type="Pfam" id="PF05206">
    <property type="entry name" value="TRM13"/>
    <property type="match status" value="1"/>
</dbReference>
<dbReference type="Pfam" id="PF11722">
    <property type="entry name" value="zf-TRM13_CCCH"/>
    <property type="match status" value="1"/>
</dbReference>
<dbReference type="Pfam" id="PF05253">
    <property type="entry name" value="zf-U11-48K"/>
    <property type="match status" value="1"/>
</dbReference>
<dbReference type="PROSITE" id="PS51800">
    <property type="entry name" value="ZF_CHHC_U11_48K"/>
    <property type="match status" value="1"/>
</dbReference>
<evidence type="ECO:0000250" key="1"/>
<evidence type="ECO:0000250" key="2">
    <source>
        <dbReference type="UniProtKB" id="Q12383"/>
    </source>
</evidence>
<evidence type="ECO:0000255" key="3">
    <source>
        <dbReference type="PROSITE-ProRule" id="PRU01141"/>
    </source>
</evidence>
<evidence type="ECO:0000305" key="4"/>
<comment type="function">
    <text evidence="2">tRNA methylase which 2'-O-methylates cytidine(4) in tRNA(Pro) and tRNA(Gly)(GCC), and adenosine(4) in tRNA(His).</text>
</comment>
<comment type="catalytic activity">
    <reaction evidence="2">
        <text>cytidine(4) in tRNA(Pro) + S-adenosyl-L-methionine = 2'-O-methylcytidine(4) in tRNA(Pro) + S-adenosyl-L-homocysteine + H(+)</text>
        <dbReference type="Rhea" id="RHEA:32767"/>
        <dbReference type="Rhea" id="RHEA-COMP:10397"/>
        <dbReference type="Rhea" id="RHEA-COMP:10398"/>
        <dbReference type="ChEBI" id="CHEBI:15378"/>
        <dbReference type="ChEBI" id="CHEBI:57856"/>
        <dbReference type="ChEBI" id="CHEBI:59789"/>
        <dbReference type="ChEBI" id="CHEBI:74495"/>
        <dbReference type="ChEBI" id="CHEBI:82748"/>
        <dbReference type="EC" id="2.1.1.225"/>
    </reaction>
</comment>
<comment type="catalytic activity">
    <reaction evidence="2">
        <text>cytidine(4) in tRNA(Gly)(GCC) + S-adenosyl-L-methionine = 2'-O-methylcytidine(4) in tRNA(Gly)(GCC) + S-adenosyl-L-homocysteine + H(+)</text>
        <dbReference type="Rhea" id="RHEA:43192"/>
        <dbReference type="Rhea" id="RHEA-COMP:10399"/>
        <dbReference type="Rhea" id="RHEA-COMP:10400"/>
        <dbReference type="ChEBI" id="CHEBI:15378"/>
        <dbReference type="ChEBI" id="CHEBI:57856"/>
        <dbReference type="ChEBI" id="CHEBI:59789"/>
        <dbReference type="ChEBI" id="CHEBI:74495"/>
        <dbReference type="ChEBI" id="CHEBI:82748"/>
        <dbReference type="EC" id="2.1.1.225"/>
    </reaction>
</comment>
<comment type="catalytic activity">
    <reaction evidence="2">
        <text>adenosine(4) in tRNA(His) + S-adenosyl-L-methionine = 2'-O-methyladenosine(4) in tRNA(His) + S-adenosyl-L-homocysteine + H(+)</text>
        <dbReference type="Rhea" id="RHEA:43196"/>
        <dbReference type="Rhea" id="RHEA-COMP:10401"/>
        <dbReference type="Rhea" id="RHEA-COMP:10402"/>
        <dbReference type="ChEBI" id="CHEBI:15378"/>
        <dbReference type="ChEBI" id="CHEBI:57856"/>
        <dbReference type="ChEBI" id="CHEBI:59789"/>
        <dbReference type="ChEBI" id="CHEBI:74411"/>
        <dbReference type="ChEBI" id="CHEBI:74477"/>
        <dbReference type="EC" id="2.1.1.225"/>
    </reaction>
</comment>
<comment type="subcellular location">
    <subcellularLocation>
        <location evidence="1">Cytoplasm</location>
    </subcellularLocation>
    <subcellularLocation>
        <location evidence="1">Nucleus</location>
        <location evidence="1">Nucleolus</location>
    </subcellularLocation>
</comment>
<comment type="similarity">
    <text evidence="4">Belongs to the methyltransferase TRM13 family.</text>
</comment>